<proteinExistence type="evidence at protein level"/>
<comment type="function">
    <text evidence="3">Functions as a response regulator involved in His-to-Asp phosphorelay signal transduction system. Phosphorylation of the Asp residue in the receiver domain activates the ability of the protein to promote the transcription of target genes. Type-A response regulators seem to act as negative regulators of the cytokinin signaling.</text>
</comment>
<comment type="subunit">
    <text evidence="2">Interacts with AHP1 and AHP3.</text>
</comment>
<comment type="interaction">
    <interactant intactId="EBI-1100950">
        <id>O80366</id>
    </interactant>
    <interactant intactId="EBI-1100673">
        <id>Q9ZNV9</id>
        <label>AHP1</label>
    </interactant>
    <organismsDiffer>false</organismsDiffer>
    <experiments>3</experiments>
</comment>
<comment type="interaction">
    <interactant intactId="EBI-1100950">
        <id>O80366</id>
    </interactant>
    <interactant intactId="EBI-1100687">
        <id>Q9ZNV8</id>
        <label>AHP2</label>
    </interactant>
    <organismsDiffer>false</organismsDiffer>
    <experiments>4</experiments>
</comment>
<comment type="interaction">
    <interactant intactId="EBI-1100950">
        <id>O80366</id>
    </interactant>
    <interactant intactId="EBI-1100711">
        <id>Q9SAZ5</id>
        <label>AHP3</label>
    </interactant>
    <organismsDiffer>false</organismsDiffer>
    <experiments>5</experiments>
</comment>
<comment type="interaction">
    <interactant intactId="EBI-1100950">
        <id>O80366</id>
    </interactant>
    <interactant intactId="EBI-1100725">
        <id>Q67XQ1</id>
        <label>At1g03430</label>
    </interactant>
    <organismsDiffer>false</organismsDiffer>
    <experiments>3</experiments>
</comment>
<comment type="interaction">
    <interactant intactId="EBI-1100950">
        <id>O80366</id>
    </interactant>
    <interactant intactId="EBI-4426144">
        <id>Q9C9L2</id>
        <label>TCP15</label>
    </interactant>
    <organismsDiffer>false</organismsDiffer>
    <experiments>3</experiments>
</comment>
<comment type="interaction">
    <interactant intactId="EBI-1100950">
        <id>O80366</id>
    </interactant>
    <interactant intactId="EBI-15192297">
        <id>Q9LQF0</id>
        <label>TCP23</label>
    </interactant>
    <organismsDiffer>false</organismsDiffer>
    <experiments>3</experiments>
</comment>
<comment type="interaction">
    <interactant intactId="EBI-1100950">
        <id>O80366</id>
    </interactant>
    <interactant intactId="EBI-25522447">
        <id>Q9MAH8</id>
        <label>TCP3</label>
    </interactant>
    <organismsDiffer>false</organismsDiffer>
    <experiments>3</experiments>
</comment>
<comment type="subcellular location">
    <subcellularLocation>
        <location evidence="5">Nucleus</location>
    </subcellularLocation>
</comment>
<comment type="tissue specificity">
    <text evidence="4">Predominantly expressed in roots.</text>
</comment>
<comment type="PTM">
    <text>Two-component system major event consists of a His-to-Asp phosphorelay between a sensor histidine kinase (HK) and a response regulator (RR). In plants, the His-to-Asp phosphorelay involves an additional intermediate named Histidine-containing phosphotransfer protein (HPt). This multistep phosphorelay consists of a His-Asp-His-Asp sequential transfer of a phosphate group between first a His and an Asp of the HK protein, followed by the transfer to a conserved His of the HPt protein and finally the transfer to an Asp in the receiver domain of the RR protein.</text>
</comment>
<comment type="similarity">
    <text evidence="5">Belongs to the ARR family. Type-A subfamily.</text>
</comment>
<name>ARR9_ARATH</name>
<dbReference type="EMBL" id="AB010918">
    <property type="protein sequence ID" value="BAA31146.1"/>
    <property type="molecule type" value="mRNA"/>
</dbReference>
<dbReference type="EMBL" id="AL138655">
    <property type="protein sequence ID" value="CAB72174.1"/>
    <property type="molecule type" value="Genomic_DNA"/>
</dbReference>
<dbReference type="EMBL" id="CP002686">
    <property type="protein sequence ID" value="AEE79602.1"/>
    <property type="molecule type" value="Genomic_DNA"/>
</dbReference>
<dbReference type="EMBL" id="CP002686">
    <property type="protein sequence ID" value="ANM63540.1"/>
    <property type="molecule type" value="Genomic_DNA"/>
</dbReference>
<dbReference type="EMBL" id="AY090234">
    <property type="protein sequence ID" value="AAL90898.1"/>
    <property type="molecule type" value="mRNA"/>
</dbReference>
<dbReference type="EMBL" id="AY133571">
    <property type="protein sequence ID" value="AAM91401.1"/>
    <property type="molecule type" value="mRNA"/>
</dbReference>
<dbReference type="PIR" id="T47764">
    <property type="entry name" value="T47764"/>
</dbReference>
<dbReference type="RefSeq" id="NP_001325622.1">
    <property type="nucleotide sequence ID" value="NM_001339837.1"/>
</dbReference>
<dbReference type="RefSeq" id="NP_191263.1">
    <property type="nucleotide sequence ID" value="NM_115563.3"/>
</dbReference>
<dbReference type="SMR" id="O80366"/>
<dbReference type="BioGRID" id="10187">
    <property type="interactions" value="10"/>
</dbReference>
<dbReference type="FunCoup" id="O80366">
    <property type="interactions" value="319"/>
</dbReference>
<dbReference type="IntAct" id="O80366">
    <property type="interactions" value="11"/>
</dbReference>
<dbReference type="STRING" id="3702.O80366"/>
<dbReference type="PaxDb" id="3702-AT3G57040.1"/>
<dbReference type="ProteomicsDB" id="246674"/>
<dbReference type="EnsemblPlants" id="AT3G57040.1">
    <property type="protein sequence ID" value="AT3G57040.1"/>
    <property type="gene ID" value="AT3G57040"/>
</dbReference>
<dbReference type="EnsemblPlants" id="AT3G57040.2">
    <property type="protein sequence ID" value="AT3G57040.2"/>
    <property type="gene ID" value="AT3G57040"/>
</dbReference>
<dbReference type="GeneID" id="824871"/>
<dbReference type="Gramene" id="AT3G57040.1">
    <property type="protein sequence ID" value="AT3G57040.1"/>
    <property type="gene ID" value="AT3G57040"/>
</dbReference>
<dbReference type="Gramene" id="AT3G57040.2">
    <property type="protein sequence ID" value="AT3G57040.2"/>
    <property type="gene ID" value="AT3G57040"/>
</dbReference>
<dbReference type="KEGG" id="ath:AT3G57040"/>
<dbReference type="Araport" id="AT3G57040"/>
<dbReference type="TAIR" id="AT3G57040">
    <property type="gene designation" value="ARR9"/>
</dbReference>
<dbReference type="eggNOG" id="KOG1601">
    <property type="taxonomic scope" value="Eukaryota"/>
</dbReference>
<dbReference type="HOGENOM" id="CLU_000445_69_5_1"/>
<dbReference type="InParanoid" id="O80366"/>
<dbReference type="OMA" id="LQXTESQ"/>
<dbReference type="PhylomeDB" id="O80366"/>
<dbReference type="PRO" id="PR:O80366"/>
<dbReference type="Proteomes" id="UP000006548">
    <property type="component" value="Chromosome 3"/>
</dbReference>
<dbReference type="ExpressionAtlas" id="O80366">
    <property type="expression patterns" value="baseline and differential"/>
</dbReference>
<dbReference type="GO" id="GO:0005634">
    <property type="term" value="C:nucleus"/>
    <property type="evidence" value="ECO:0000314"/>
    <property type="project" value="TAIR"/>
</dbReference>
<dbReference type="GO" id="GO:0000156">
    <property type="term" value="F:phosphorelay response regulator activity"/>
    <property type="evidence" value="ECO:0000250"/>
    <property type="project" value="TAIR"/>
</dbReference>
<dbReference type="GO" id="GO:0007623">
    <property type="term" value="P:circadian rhythm"/>
    <property type="evidence" value="ECO:0000315"/>
    <property type="project" value="TAIR"/>
</dbReference>
<dbReference type="GO" id="GO:0009736">
    <property type="term" value="P:cytokinin-activated signaling pathway"/>
    <property type="evidence" value="ECO:0000315"/>
    <property type="project" value="TAIR"/>
</dbReference>
<dbReference type="GO" id="GO:0000160">
    <property type="term" value="P:phosphorelay signal transduction system"/>
    <property type="evidence" value="ECO:0000353"/>
    <property type="project" value="TAIR"/>
</dbReference>
<dbReference type="GO" id="GO:0006355">
    <property type="term" value="P:regulation of DNA-templated transcription"/>
    <property type="evidence" value="ECO:0000304"/>
    <property type="project" value="TAIR"/>
</dbReference>
<dbReference type="GO" id="GO:0009735">
    <property type="term" value="P:response to cytokinin"/>
    <property type="evidence" value="ECO:0000270"/>
    <property type="project" value="TAIR"/>
</dbReference>
<dbReference type="CDD" id="cd17581">
    <property type="entry name" value="REC_typeA_ARR"/>
    <property type="match status" value="1"/>
</dbReference>
<dbReference type="FunFam" id="3.40.50.2300:FF:000291">
    <property type="entry name" value="Two-component response regulator ORR4"/>
    <property type="match status" value="1"/>
</dbReference>
<dbReference type="Gene3D" id="3.40.50.2300">
    <property type="match status" value="1"/>
</dbReference>
<dbReference type="InterPro" id="IPR045279">
    <property type="entry name" value="ARR-like"/>
</dbReference>
<dbReference type="InterPro" id="IPR011006">
    <property type="entry name" value="CheY-like_superfamily"/>
</dbReference>
<dbReference type="InterPro" id="IPR001789">
    <property type="entry name" value="Sig_transdc_resp-reg_receiver"/>
</dbReference>
<dbReference type="PANTHER" id="PTHR43874">
    <property type="entry name" value="TWO-COMPONENT RESPONSE REGULATOR"/>
    <property type="match status" value="1"/>
</dbReference>
<dbReference type="PANTHER" id="PTHR43874:SF167">
    <property type="entry name" value="TWO-COMPONENT RESPONSE REGULATOR ARR9"/>
    <property type="match status" value="1"/>
</dbReference>
<dbReference type="Pfam" id="PF00072">
    <property type="entry name" value="Response_reg"/>
    <property type="match status" value="1"/>
</dbReference>
<dbReference type="SMART" id="SM00448">
    <property type="entry name" value="REC"/>
    <property type="match status" value="1"/>
</dbReference>
<dbReference type="SUPFAM" id="SSF52172">
    <property type="entry name" value="CheY-like"/>
    <property type="match status" value="1"/>
</dbReference>
<dbReference type="PROSITE" id="PS50110">
    <property type="entry name" value="RESPONSE_REGULATORY"/>
    <property type="match status" value="1"/>
</dbReference>
<accession>O80366</accession>
<sequence>MGMAAESQFHVLAVDDSLFDRKLIERLLQKSSCQVTTVDSGSKALEFLGLRQSTDSNDPNAFSKAPVNHQVVEVNLIITDYCMPGMTGYDLLKKVKESSAFRDIPVVIMSSENVPARISRCLEEGAEEFFLKPVRLADLNKLKPHMMKTKLKNQKLEEIETTSKVENGVPTAVADPEIKDSTNIEIEILPLQQDLLLVQQEEQTLSINNKRKSVEEGISTDRARPRFDGIATAV</sequence>
<organism>
    <name type="scientific">Arabidopsis thaliana</name>
    <name type="common">Mouse-ear cress</name>
    <dbReference type="NCBI Taxonomy" id="3702"/>
    <lineage>
        <taxon>Eukaryota</taxon>
        <taxon>Viridiplantae</taxon>
        <taxon>Streptophyta</taxon>
        <taxon>Embryophyta</taxon>
        <taxon>Tracheophyta</taxon>
        <taxon>Spermatophyta</taxon>
        <taxon>Magnoliopsida</taxon>
        <taxon>eudicotyledons</taxon>
        <taxon>Gunneridae</taxon>
        <taxon>Pentapetalae</taxon>
        <taxon>rosids</taxon>
        <taxon>malvids</taxon>
        <taxon>Brassicales</taxon>
        <taxon>Brassicaceae</taxon>
        <taxon>Camelineae</taxon>
        <taxon>Arabidopsis</taxon>
    </lineage>
</organism>
<feature type="chain" id="PRO_0000081430" description="Two-component response regulator ARR9">
    <location>
        <begin position="1"/>
        <end position="234"/>
    </location>
</feature>
<feature type="domain" description="Response regulatory" evidence="1">
    <location>
        <begin position="10"/>
        <end position="147"/>
    </location>
</feature>
<feature type="modified residue" description="4-aspartylphosphate" evidence="1">
    <location>
        <position position="80"/>
    </location>
</feature>
<evidence type="ECO:0000255" key="1">
    <source>
        <dbReference type="PROSITE-ProRule" id="PRU00169"/>
    </source>
</evidence>
<evidence type="ECO:0000269" key="2">
    <source>
    </source>
</evidence>
<evidence type="ECO:0000269" key="3">
    <source>
    </source>
</evidence>
<evidence type="ECO:0000269" key="4">
    <source>
    </source>
</evidence>
<evidence type="ECO:0000305" key="5"/>
<gene>
    <name type="primary">ARR9</name>
    <name type="synonym">ATRR4</name>
    <name type="ordered locus">At3g57040</name>
    <name type="ORF">F24I3.120</name>
</gene>
<keyword id="KW-0932">Cytokinin signaling pathway</keyword>
<keyword id="KW-0539">Nucleus</keyword>
<keyword id="KW-0597">Phosphoprotein</keyword>
<keyword id="KW-1185">Reference proteome</keyword>
<keyword id="KW-0804">Transcription</keyword>
<keyword id="KW-0805">Transcription regulation</keyword>
<keyword id="KW-0902">Two-component regulatory system</keyword>
<reference key="1">
    <citation type="journal article" date="1998" name="FEBS Lett.">
        <title>Stress-responsive expression of genes for two-component response regulator-like proteins in Arabidopsis thaliana.</title>
        <authorList>
            <person name="Urao T."/>
            <person name="Yakubov B."/>
            <person name="Yamaguchi-Shinozaki K."/>
            <person name="Shinozaki K."/>
        </authorList>
    </citation>
    <scope>NUCLEOTIDE SEQUENCE [MRNA]</scope>
    <scope>TISSUE SPECIFICITY</scope>
    <source>
        <strain>cv. Columbia</strain>
    </source>
</reference>
<reference key="2">
    <citation type="journal article" date="2000" name="Nature">
        <title>Sequence and analysis of chromosome 3 of the plant Arabidopsis thaliana.</title>
        <authorList>
            <person name="Salanoubat M."/>
            <person name="Lemcke K."/>
            <person name="Rieger M."/>
            <person name="Ansorge W."/>
            <person name="Unseld M."/>
            <person name="Fartmann B."/>
            <person name="Valle G."/>
            <person name="Bloecker H."/>
            <person name="Perez-Alonso M."/>
            <person name="Obermaier B."/>
            <person name="Delseny M."/>
            <person name="Boutry M."/>
            <person name="Grivell L.A."/>
            <person name="Mache R."/>
            <person name="Puigdomenech P."/>
            <person name="De Simone V."/>
            <person name="Choisne N."/>
            <person name="Artiguenave F."/>
            <person name="Robert C."/>
            <person name="Brottier P."/>
            <person name="Wincker P."/>
            <person name="Cattolico L."/>
            <person name="Weissenbach J."/>
            <person name="Saurin W."/>
            <person name="Quetier F."/>
            <person name="Schaefer M."/>
            <person name="Mueller-Auer S."/>
            <person name="Gabel C."/>
            <person name="Fuchs M."/>
            <person name="Benes V."/>
            <person name="Wurmbach E."/>
            <person name="Drzonek H."/>
            <person name="Erfle H."/>
            <person name="Jordan N."/>
            <person name="Bangert S."/>
            <person name="Wiedelmann R."/>
            <person name="Kranz H."/>
            <person name="Voss H."/>
            <person name="Holland R."/>
            <person name="Brandt P."/>
            <person name="Nyakatura G."/>
            <person name="Vezzi A."/>
            <person name="D'Angelo M."/>
            <person name="Pallavicini A."/>
            <person name="Toppo S."/>
            <person name="Simionati B."/>
            <person name="Conrad A."/>
            <person name="Hornischer K."/>
            <person name="Kauer G."/>
            <person name="Loehnert T.-H."/>
            <person name="Nordsiek G."/>
            <person name="Reichelt J."/>
            <person name="Scharfe M."/>
            <person name="Schoen O."/>
            <person name="Bargues M."/>
            <person name="Terol J."/>
            <person name="Climent J."/>
            <person name="Navarro P."/>
            <person name="Collado C."/>
            <person name="Perez-Perez A."/>
            <person name="Ottenwaelder B."/>
            <person name="Duchemin D."/>
            <person name="Cooke R."/>
            <person name="Laudie M."/>
            <person name="Berger-Llauro C."/>
            <person name="Purnelle B."/>
            <person name="Masuy D."/>
            <person name="de Haan M."/>
            <person name="Maarse A.C."/>
            <person name="Alcaraz J.-P."/>
            <person name="Cottet A."/>
            <person name="Casacuberta E."/>
            <person name="Monfort A."/>
            <person name="Argiriou A."/>
            <person name="Flores M."/>
            <person name="Liguori R."/>
            <person name="Vitale D."/>
            <person name="Mannhaupt G."/>
            <person name="Haase D."/>
            <person name="Schoof H."/>
            <person name="Rudd S."/>
            <person name="Zaccaria P."/>
            <person name="Mewes H.-W."/>
            <person name="Mayer K.F.X."/>
            <person name="Kaul S."/>
            <person name="Town C.D."/>
            <person name="Koo H.L."/>
            <person name="Tallon L.J."/>
            <person name="Jenkins J."/>
            <person name="Rooney T."/>
            <person name="Rizzo M."/>
            <person name="Walts A."/>
            <person name="Utterback T."/>
            <person name="Fujii C.Y."/>
            <person name="Shea T.P."/>
            <person name="Creasy T.H."/>
            <person name="Haas B."/>
            <person name="Maiti R."/>
            <person name="Wu D."/>
            <person name="Peterson J."/>
            <person name="Van Aken S."/>
            <person name="Pai G."/>
            <person name="Militscher J."/>
            <person name="Sellers P."/>
            <person name="Gill J.E."/>
            <person name="Feldblyum T.V."/>
            <person name="Preuss D."/>
            <person name="Lin X."/>
            <person name="Nierman W.C."/>
            <person name="Salzberg S.L."/>
            <person name="White O."/>
            <person name="Venter J.C."/>
            <person name="Fraser C.M."/>
            <person name="Kaneko T."/>
            <person name="Nakamura Y."/>
            <person name="Sato S."/>
            <person name="Kato T."/>
            <person name="Asamizu E."/>
            <person name="Sasamoto S."/>
            <person name="Kimura T."/>
            <person name="Idesawa K."/>
            <person name="Kawashima K."/>
            <person name="Kishida Y."/>
            <person name="Kiyokawa C."/>
            <person name="Kohara M."/>
            <person name="Matsumoto M."/>
            <person name="Matsuno A."/>
            <person name="Muraki A."/>
            <person name="Nakayama S."/>
            <person name="Nakazaki N."/>
            <person name="Shinpo S."/>
            <person name="Takeuchi C."/>
            <person name="Wada T."/>
            <person name="Watanabe A."/>
            <person name="Yamada M."/>
            <person name="Yasuda M."/>
            <person name="Tabata S."/>
        </authorList>
    </citation>
    <scope>NUCLEOTIDE SEQUENCE [LARGE SCALE GENOMIC DNA]</scope>
    <source>
        <strain>cv. Columbia</strain>
    </source>
</reference>
<reference key="3">
    <citation type="journal article" date="2017" name="Plant J.">
        <title>Araport11: a complete reannotation of the Arabidopsis thaliana reference genome.</title>
        <authorList>
            <person name="Cheng C.Y."/>
            <person name="Krishnakumar V."/>
            <person name="Chan A.P."/>
            <person name="Thibaud-Nissen F."/>
            <person name="Schobel S."/>
            <person name="Town C.D."/>
        </authorList>
    </citation>
    <scope>GENOME REANNOTATION</scope>
    <source>
        <strain>cv. Columbia</strain>
    </source>
</reference>
<reference key="4">
    <citation type="journal article" date="2003" name="Science">
        <title>Empirical analysis of transcriptional activity in the Arabidopsis genome.</title>
        <authorList>
            <person name="Yamada K."/>
            <person name="Lim J."/>
            <person name="Dale J.M."/>
            <person name="Chen H."/>
            <person name="Shinn P."/>
            <person name="Palm C.J."/>
            <person name="Southwick A.M."/>
            <person name="Wu H.C."/>
            <person name="Kim C.J."/>
            <person name="Nguyen M."/>
            <person name="Pham P.K."/>
            <person name="Cheuk R.F."/>
            <person name="Karlin-Newmann G."/>
            <person name="Liu S.X."/>
            <person name="Lam B."/>
            <person name="Sakano H."/>
            <person name="Wu T."/>
            <person name="Yu G."/>
            <person name="Miranda M."/>
            <person name="Quach H.L."/>
            <person name="Tripp M."/>
            <person name="Chang C.H."/>
            <person name="Lee J.M."/>
            <person name="Toriumi M.J."/>
            <person name="Chan M.M."/>
            <person name="Tang C.C."/>
            <person name="Onodera C.S."/>
            <person name="Deng J.M."/>
            <person name="Akiyama K."/>
            <person name="Ansari Y."/>
            <person name="Arakawa T."/>
            <person name="Banh J."/>
            <person name="Banno F."/>
            <person name="Bowser L."/>
            <person name="Brooks S.Y."/>
            <person name="Carninci P."/>
            <person name="Chao Q."/>
            <person name="Choy N."/>
            <person name="Enju A."/>
            <person name="Goldsmith A.D."/>
            <person name="Gurjal M."/>
            <person name="Hansen N.F."/>
            <person name="Hayashizaki Y."/>
            <person name="Johnson-Hopson C."/>
            <person name="Hsuan V.W."/>
            <person name="Iida K."/>
            <person name="Karnes M."/>
            <person name="Khan S."/>
            <person name="Koesema E."/>
            <person name="Ishida J."/>
            <person name="Jiang P.X."/>
            <person name="Jones T."/>
            <person name="Kawai J."/>
            <person name="Kamiya A."/>
            <person name="Meyers C."/>
            <person name="Nakajima M."/>
            <person name="Narusaka M."/>
            <person name="Seki M."/>
            <person name="Sakurai T."/>
            <person name="Satou M."/>
            <person name="Tamse R."/>
            <person name="Vaysberg M."/>
            <person name="Wallender E.K."/>
            <person name="Wong C."/>
            <person name="Yamamura Y."/>
            <person name="Yuan S."/>
            <person name="Shinozaki K."/>
            <person name="Davis R.W."/>
            <person name="Theologis A."/>
            <person name="Ecker J.R."/>
        </authorList>
    </citation>
    <scope>NUCLEOTIDE SEQUENCE [LARGE SCALE MRNA]</scope>
    <source>
        <strain>cv. Columbia</strain>
    </source>
</reference>
<reference key="5">
    <citation type="journal article" date="2000" name="FEBS Lett.">
        <title>Possible His to Asp phosphorelay signaling in an Arabidopsis two-component system.</title>
        <authorList>
            <person name="Urao T."/>
            <person name="Miyata S."/>
            <person name="Yamaguchi-Shinozaki K."/>
            <person name="Shinozaki K."/>
        </authorList>
    </citation>
    <scope>INTERACTION WITH AHP1 AND AHP3</scope>
</reference>
<reference key="6">
    <citation type="journal article" date="2004" name="Plant Cell">
        <title>Type-A Arabidopsis response regulators are partially redundant negative regulators of cytokinin signaling.</title>
        <authorList>
            <person name="To J.P.C."/>
            <person name="Haberer G."/>
            <person name="Ferreira F.J."/>
            <person name="Deruere J."/>
            <person name="Mason M.G."/>
            <person name="Schaller G.E."/>
            <person name="Alonso J.M."/>
            <person name="Ecker J.R."/>
            <person name="Kieber J.J."/>
        </authorList>
    </citation>
    <scope>FUNCTION</scope>
</reference>
<protein>
    <recommendedName>
        <fullName>Two-component response regulator ARR9</fullName>
    </recommendedName>
    <alternativeName>
        <fullName>Response reactor 4</fullName>
    </alternativeName>
</protein>